<protein>
    <recommendedName>
        <fullName>Carboxypeptidase Y homolog A</fullName>
        <ecNumber>3.4.16.5</ecNumber>
    </recommendedName>
</protein>
<name>CBPYA_BLAGS</name>
<sequence length="545" mass="60297">MKSLALALLVGGAIAAGPQQQVLQAPVDNPDVAEPPLQTIADTFDHLRGQATNLWNDVIDKVPNIMDTITHTPPPKKFNRRPDSEWNHIVRGAEIQAVWVEGDDGEKHRKVGGKLEAYDLRVKAVDPKALGVDTVRQYSGYLDDNENDKHLFYWFFESRNDPENDPVVLWLNGGPGCSSLTGLFLELGPSSITEDLKVNYNPYSWNANASVIFLDQPVNVGYSYSGGSVSDTNAAGKDVYALLTLFFEQFPEYAKQDFHIAGESYAGHYIPVFASEIMAHKERNINLKSILIGNGLTDPLTQYPLYRPMACGEGGYPAVLDQASCQSMDNALPRCLSMIEACYSSESAWTCVPASIYCNNAIIGPYQRTGRNPYDVRTDCEGGNLCYTQLGDISKYLNQAEVMKALGAEVSTYDSCNMDINRNFLFRGDWMKPFHRLVPGLIAEMPVLLYAGDADFICNWLGNKAWAEALEYPGHAKFAAAEMKNLTIVDNKSKGKVIGQVKSAGNFTFMRLYGGGHMVPLDQPEASLEFMNRWLKGEWSAKSSS</sequence>
<organism>
    <name type="scientific">Blastomyces gilchristii (strain SLH14081)</name>
    <name type="common">Blastomyces dermatitidis</name>
    <dbReference type="NCBI Taxonomy" id="559298"/>
    <lineage>
        <taxon>Eukaryota</taxon>
        <taxon>Fungi</taxon>
        <taxon>Dikarya</taxon>
        <taxon>Ascomycota</taxon>
        <taxon>Pezizomycotina</taxon>
        <taxon>Eurotiomycetes</taxon>
        <taxon>Eurotiomycetidae</taxon>
        <taxon>Onygenales</taxon>
        <taxon>Ajellomycetaceae</taxon>
        <taxon>Blastomyces</taxon>
    </lineage>
</organism>
<comment type="function">
    <text evidence="1">Vacuolar carboxypeptidase involved in degradation of small peptides. Digests preferentially peptides containing an aliphatic or hydrophobic residue in P1' position, as well as methionine, leucine or phenylalanine in P1 position of ester substrate (By similarity).</text>
</comment>
<comment type="catalytic activity">
    <reaction evidence="3">
        <text>Release of a C-terminal amino acid with broad specificity.</text>
        <dbReference type="EC" id="3.4.16.5"/>
    </reaction>
</comment>
<comment type="subcellular location">
    <subcellularLocation>
        <location evidence="1">Vacuole</location>
    </subcellularLocation>
</comment>
<comment type="similarity">
    <text evidence="4">Belongs to the peptidase S10 family.</text>
</comment>
<evidence type="ECO:0000250" key="1"/>
<evidence type="ECO:0000255" key="2"/>
<evidence type="ECO:0000255" key="3">
    <source>
        <dbReference type="PROSITE-ProRule" id="PRU10074"/>
    </source>
</evidence>
<evidence type="ECO:0000305" key="4"/>
<proteinExistence type="inferred from homology"/>
<accession>C5K1Y9</accession>
<accession>A0A179V017</accession>
<feature type="signal peptide" evidence="2">
    <location>
        <begin position="1"/>
        <end position="17"/>
    </location>
</feature>
<feature type="propeptide" id="PRO_0000407422" evidence="1">
    <location>
        <begin position="18"/>
        <end position="123"/>
    </location>
</feature>
<feature type="chain" id="PRO_0000407423" description="Carboxypeptidase Y homolog A">
    <location>
        <begin position="124"/>
        <end position="545"/>
    </location>
</feature>
<feature type="active site" evidence="3">
    <location>
        <position position="264"/>
    </location>
</feature>
<feature type="active site" evidence="3">
    <location>
        <position position="455"/>
    </location>
</feature>
<feature type="active site" evidence="3">
    <location>
        <position position="517"/>
    </location>
</feature>
<feature type="glycosylation site" description="N-linked (GlcNAc...) asparagine" evidence="2">
    <location>
        <position position="208"/>
    </location>
</feature>
<feature type="glycosylation site" description="N-linked (GlcNAc...) asparagine" evidence="2">
    <location>
        <position position="485"/>
    </location>
</feature>
<feature type="glycosylation site" description="N-linked (GlcNAc...) asparagine" evidence="2">
    <location>
        <position position="491"/>
    </location>
</feature>
<feature type="glycosylation site" description="N-linked (GlcNAc...) asparagine" evidence="2">
    <location>
        <position position="506"/>
    </location>
</feature>
<feature type="disulfide bond" evidence="1">
    <location>
        <begin position="177"/>
        <end position="416"/>
    </location>
</feature>
<feature type="disulfide bond" evidence="1">
    <location>
        <begin position="311"/>
        <end position="325"/>
    </location>
</feature>
<feature type="disulfide bond" evidence="1">
    <location>
        <begin position="335"/>
        <end position="358"/>
    </location>
</feature>
<feature type="disulfide bond" evidence="1">
    <location>
        <begin position="342"/>
        <end position="351"/>
    </location>
</feature>
<feature type="disulfide bond" evidence="1">
    <location>
        <begin position="380"/>
        <end position="386"/>
    </location>
</feature>
<gene>
    <name type="primary">CPYA</name>
    <name type="ORF">BDBG_08833</name>
</gene>
<keyword id="KW-0121">Carboxypeptidase</keyword>
<keyword id="KW-1015">Disulfide bond</keyword>
<keyword id="KW-0325">Glycoprotein</keyword>
<keyword id="KW-0378">Hydrolase</keyword>
<keyword id="KW-0645">Protease</keyword>
<keyword id="KW-1185">Reference proteome</keyword>
<keyword id="KW-0732">Signal</keyword>
<keyword id="KW-0926">Vacuole</keyword>
<keyword id="KW-0865">Zymogen</keyword>
<dbReference type="EC" id="3.4.16.5"/>
<dbReference type="EMBL" id="GG657476">
    <property type="protein sequence ID" value="OAT13676.1"/>
    <property type="molecule type" value="Genomic_DNA"/>
</dbReference>
<dbReference type="RefSeq" id="XP_002620806.1">
    <property type="nucleotide sequence ID" value="XM_002620760.1"/>
</dbReference>
<dbReference type="SMR" id="C5K1Y9"/>
<dbReference type="STRING" id="559298.C5K1Y9"/>
<dbReference type="ESTHER" id="ajedr-cbpya">
    <property type="family name" value="Carboxypeptidase_S10"/>
</dbReference>
<dbReference type="MEROPS" id="S10.001"/>
<dbReference type="GlyCosmos" id="C5K1Y9">
    <property type="glycosylation" value="4 sites, No reported glycans"/>
</dbReference>
<dbReference type="GeneID" id="8501362"/>
<dbReference type="KEGG" id="bgh:BDBG_08833"/>
<dbReference type="VEuPathDB" id="FungiDB:BDBG_08833"/>
<dbReference type="HOGENOM" id="CLU_008523_10_4_1"/>
<dbReference type="OrthoDB" id="443318at2759"/>
<dbReference type="Proteomes" id="UP000002038">
    <property type="component" value="Unassembled WGS sequence"/>
</dbReference>
<dbReference type="GO" id="GO:0000324">
    <property type="term" value="C:fungal-type vacuole"/>
    <property type="evidence" value="ECO:0007669"/>
    <property type="project" value="TreeGrafter"/>
</dbReference>
<dbReference type="GO" id="GO:0004185">
    <property type="term" value="F:serine-type carboxypeptidase activity"/>
    <property type="evidence" value="ECO:0007669"/>
    <property type="project" value="UniProtKB-EC"/>
</dbReference>
<dbReference type="GO" id="GO:0006508">
    <property type="term" value="P:proteolysis"/>
    <property type="evidence" value="ECO:0007669"/>
    <property type="project" value="UniProtKB-KW"/>
</dbReference>
<dbReference type="FunFam" id="1.10.287.410:FF:000001">
    <property type="entry name" value="Carboxypeptidase Y"/>
    <property type="match status" value="1"/>
</dbReference>
<dbReference type="Gene3D" id="1.10.287.410">
    <property type="match status" value="1"/>
</dbReference>
<dbReference type="Gene3D" id="3.40.50.1820">
    <property type="entry name" value="alpha/beta hydrolase"/>
    <property type="match status" value="1"/>
</dbReference>
<dbReference type="InterPro" id="IPR029058">
    <property type="entry name" value="AB_hydrolase_fold"/>
</dbReference>
<dbReference type="InterPro" id="IPR001563">
    <property type="entry name" value="Peptidase_S10"/>
</dbReference>
<dbReference type="InterPro" id="IPR018202">
    <property type="entry name" value="Ser_caboxypep_ser_AS"/>
</dbReference>
<dbReference type="PANTHER" id="PTHR11802:SF113">
    <property type="entry name" value="SERINE CARBOXYPEPTIDASE CTSA-4.1"/>
    <property type="match status" value="1"/>
</dbReference>
<dbReference type="PANTHER" id="PTHR11802">
    <property type="entry name" value="SERINE PROTEASE FAMILY S10 SERINE CARBOXYPEPTIDASE"/>
    <property type="match status" value="1"/>
</dbReference>
<dbReference type="Pfam" id="PF00450">
    <property type="entry name" value="Peptidase_S10"/>
    <property type="match status" value="1"/>
</dbReference>
<dbReference type="PRINTS" id="PR00724">
    <property type="entry name" value="CRBOXYPTASEC"/>
</dbReference>
<dbReference type="SUPFAM" id="SSF53474">
    <property type="entry name" value="alpha/beta-Hydrolases"/>
    <property type="match status" value="1"/>
</dbReference>
<dbReference type="PROSITE" id="PS00131">
    <property type="entry name" value="CARBOXYPEPT_SER_SER"/>
    <property type="match status" value="1"/>
</dbReference>
<reference key="1">
    <citation type="journal article" date="2015" name="PLoS Genet.">
        <title>The dynamic genome and transcriptome of the human fungal pathogen Blastomyces and close relative Emmonsia.</title>
        <authorList>
            <person name="Munoz J.F."/>
            <person name="Gauthier G.M."/>
            <person name="Desjardins C.A."/>
            <person name="Gallo J.E."/>
            <person name="Holder J."/>
            <person name="Sullivan T.D."/>
            <person name="Marty A.J."/>
            <person name="Carmen J.C."/>
            <person name="Chen Z."/>
            <person name="Ding L."/>
            <person name="Gujja S."/>
            <person name="Magrini V."/>
            <person name="Misas E."/>
            <person name="Mitreva M."/>
            <person name="Priest M."/>
            <person name="Saif S."/>
            <person name="Whiston E.A."/>
            <person name="Young S."/>
            <person name="Zeng Q."/>
            <person name="Goldman W.E."/>
            <person name="Mardis E.R."/>
            <person name="Taylor J.W."/>
            <person name="McEwen J.G."/>
            <person name="Clay O.K."/>
            <person name="Klein B.S."/>
            <person name="Cuomo C.A."/>
        </authorList>
    </citation>
    <scope>NUCLEOTIDE SEQUENCE [LARGE SCALE GENOMIC DNA]</scope>
    <source>
        <strain>SLH14081</strain>
    </source>
</reference>